<accession>B8DDU2</accession>
<comment type="function">
    <text evidence="1">Transcriptional factor involved in regulation of membrane lipid biosynthesis by repressing genes involved in fatty acid and phospholipid metabolism.</text>
</comment>
<comment type="similarity">
    <text evidence="1">Belongs to the FapR family.</text>
</comment>
<evidence type="ECO:0000255" key="1">
    <source>
        <dbReference type="HAMAP-Rule" id="MF_01814"/>
    </source>
</evidence>
<protein>
    <recommendedName>
        <fullName evidence="1">Transcription factor FapR</fullName>
    </recommendedName>
    <alternativeName>
        <fullName evidence="1">Fatty acid and phospholipid biosynthesis regulator</fullName>
    </alternativeName>
</protein>
<sequence length="189" mass="21284">MKKYSKKDRQMKLQVAIEENPFITDEQLAEKFGVSVQTIRLDRVALSIPELRERIKHVASVTYADAVKSLPIDEVIGEIIDIQLSKSAISIFDVRSEHVFKRNKIARGHHLFAQANSLATAVIPNEIALTTQATVRFVRSVNEGERIIAKAKVRPATDNRAITIVDVKSYVGDEIVLKGKFEMYHATQK</sequence>
<organism>
    <name type="scientific">Listeria monocytogenes serotype 4a (strain HCC23)</name>
    <dbReference type="NCBI Taxonomy" id="552536"/>
    <lineage>
        <taxon>Bacteria</taxon>
        <taxon>Bacillati</taxon>
        <taxon>Bacillota</taxon>
        <taxon>Bacilli</taxon>
        <taxon>Bacillales</taxon>
        <taxon>Listeriaceae</taxon>
        <taxon>Listeria</taxon>
    </lineage>
</organism>
<name>FAPR_LISMH</name>
<reference key="1">
    <citation type="journal article" date="2011" name="J. Bacteriol.">
        <title>Genome sequence of lineage III Listeria monocytogenes strain HCC23.</title>
        <authorList>
            <person name="Steele C.L."/>
            <person name="Donaldson J.R."/>
            <person name="Paul D."/>
            <person name="Banes M.M."/>
            <person name="Arick T."/>
            <person name="Bridges S.M."/>
            <person name="Lawrence M.L."/>
        </authorList>
    </citation>
    <scope>NUCLEOTIDE SEQUENCE [LARGE SCALE GENOMIC DNA]</scope>
    <source>
        <strain>HCC23</strain>
    </source>
</reference>
<feature type="chain" id="PRO_1000187835" description="Transcription factor FapR">
    <location>
        <begin position="1"/>
        <end position="189"/>
    </location>
</feature>
<proteinExistence type="inferred from homology"/>
<gene>
    <name evidence="1" type="primary">fapR</name>
    <name type="ordered locus">LMHCC_0747</name>
</gene>
<dbReference type="EMBL" id="CP001175">
    <property type="protein sequence ID" value="ACK39101.1"/>
    <property type="molecule type" value="Genomic_DNA"/>
</dbReference>
<dbReference type="RefSeq" id="WP_012581127.1">
    <property type="nucleotide sequence ID" value="NC_011660.1"/>
</dbReference>
<dbReference type="SMR" id="B8DDU2"/>
<dbReference type="KEGG" id="lmh:LMHCC_0747"/>
<dbReference type="HOGENOM" id="CLU_095708_0_0_9"/>
<dbReference type="GO" id="GO:0003677">
    <property type="term" value="F:DNA binding"/>
    <property type="evidence" value="ECO:0007669"/>
    <property type="project" value="UniProtKB-KW"/>
</dbReference>
<dbReference type="GO" id="GO:0003700">
    <property type="term" value="F:DNA-binding transcription factor activity"/>
    <property type="evidence" value="ECO:0007669"/>
    <property type="project" value="UniProtKB-UniRule"/>
</dbReference>
<dbReference type="GO" id="GO:0006633">
    <property type="term" value="P:fatty acid biosynthetic process"/>
    <property type="evidence" value="ECO:0007669"/>
    <property type="project" value="UniProtKB-KW"/>
</dbReference>
<dbReference type="GO" id="GO:0045892">
    <property type="term" value="P:negative regulation of DNA-templated transcription"/>
    <property type="evidence" value="ECO:0007669"/>
    <property type="project" value="UniProtKB-UniRule"/>
</dbReference>
<dbReference type="GO" id="GO:0045717">
    <property type="term" value="P:negative regulation of fatty acid biosynthetic process"/>
    <property type="evidence" value="ECO:0007669"/>
    <property type="project" value="UniProtKB-UniRule"/>
</dbReference>
<dbReference type="CDD" id="cd03440">
    <property type="entry name" value="hot_dog"/>
    <property type="match status" value="1"/>
</dbReference>
<dbReference type="Gene3D" id="3.10.129.10">
    <property type="entry name" value="Hotdog Thioesterase"/>
    <property type="match status" value="1"/>
</dbReference>
<dbReference type="Gene3D" id="1.10.10.10">
    <property type="entry name" value="Winged helix-like DNA-binding domain superfamily/Winged helix DNA-binding domain"/>
    <property type="match status" value="1"/>
</dbReference>
<dbReference type="HAMAP" id="MF_01814">
    <property type="entry name" value="Transcrip_fact_FapR"/>
    <property type="match status" value="1"/>
</dbReference>
<dbReference type="InterPro" id="IPR029069">
    <property type="entry name" value="HotDog_dom_sf"/>
</dbReference>
<dbReference type="InterPro" id="IPR017275">
    <property type="entry name" value="Transcription_factor_FapR"/>
</dbReference>
<dbReference type="InterPro" id="IPR036388">
    <property type="entry name" value="WH-like_DNA-bd_sf"/>
</dbReference>
<dbReference type="NCBIfam" id="NF003359">
    <property type="entry name" value="PRK04424.1"/>
    <property type="match status" value="1"/>
</dbReference>
<dbReference type="PIRSF" id="PIRSF037733">
    <property type="entry name" value="Transcription_factor_FapR"/>
    <property type="match status" value="1"/>
</dbReference>
<dbReference type="SUPFAM" id="SSF54637">
    <property type="entry name" value="Thioesterase/thiol ester dehydrase-isomerase"/>
    <property type="match status" value="1"/>
</dbReference>
<keyword id="KW-0238">DNA-binding</keyword>
<keyword id="KW-0275">Fatty acid biosynthesis</keyword>
<keyword id="KW-0276">Fatty acid metabolism</keyword>
<keyword id="KW-0444">Lipid biosynthesis</keyword>
<keyword id="KW-0443">Lipid metabolism</keyword>
<keyword id="KW-0678">Repressor</keyword>
<keyword id="KW-0804">Transcription</keyword>
<keyword id="KW-0805">Transcription regulation</keyword>